<reference key="1">
    <citation type="journal article" date="1999" name="Nature">
        <title>Sequence and analysis of chromosome 2 of the plant Arabidopsis thaliana.</title>
        <authorList>
            <person name="Lin X."/>
            <person name="Kaul S."/>
            <person name="Rounsley S.D."/>
            <person name="Shea T.P."/>
            <person name="Benito M.-I."/>
            <person name="Town C.D."/>
            <person name="Fujii C.Y."/>
            <person name="Mason T.M."/>
            <person name="Bowman C.L."/>
            <person name="Barnstead M.E."/>
            <person name="Feldblyum T.V."/>
            <person name="Buell C.R."/>
            <person name="Ketchum K.A."/>
            <person name="Lee J.J."/>
            <person name="Ronning C.M."/>
            <person name="Koo H.L."/>
            <person name="Moffat K.S."/>
            <person name="Cronin L.A."/>
            <person name="Shen M."/>
            <person name="Pai G."/>
            <person name="Van Aken S."/>
            <person name="Umayam L."/>
            <person name="Tallon L.J."/>
            <person name="Gill J.E."/>
            <person name="Adams M.D."/>
            <person name="Carrera A.J."/>
            <person name="Creasy T.H."/>
            <person name="Goodman H.M."/>
            <person name="Somerville C.R."/>
            <person name="Copenhaver G.P."/>
            <person name="Preuss D."/>
            <person name="Nierman W.C."/>
            <person name="White O."/>
            <person name="Eisen J.A."/>
            <person name="Salzberg S.L."/>
            <person name="Fraser C.M."/>
            <person name="Venter J.C."/>
        </authorList>
    </citation>
    <scope>NUCLEOTIDE SEQUENCE [LARGE SCALE GENOMIC DNA]</scope>
    <source>
        <strain>cv. Columbia</strain>
    </source>
</reference>
<reference key="2">
    <citation type="journal article" date="2017" name="Plant J.">
        <title>Araport11: a complete reannotation of the Arabidopsis thaliana reference genome.</title>
        <authorList>
            <person name="Cheng C.Y."/>
            <person name="Krishnakumar V."/>
            <person name="Chan A.P."/>
            <person name="Thibaud-Nissen F."/>
            <person name="Schobel S."/>
            <person name="Town C.D."/>
        </authorList>
    </citation>
    <scope>GENOME REANNOTATION</scope>
    <source>
        <strain>cv. Columbia</strain>
    </source>
</reference>
<reference key="3">
    <citation type="submission" date="2004-11" db="EMBL/GenBank/DDBJ databases">
        <title>Arabidopsis ORF clones.</title>
        <authorList>
            <person name="Shinn P."/>
            <person name="Chen H."/>
            <person name="Cheuk R."/>
            <person name="Kim C.J."/>
            <person name="Ecker J.R."/>
        </authorList>
    </citation>
    <scope>NUCLEOTIDE SEQUENCE [LARGE SCALE MRNA]</scope>
    <source>
        <strain>cv. Columbia</strain>
    </source>
</reference>
<reference key="4">
    <citation type="submission" date="2006-07" db="EMBL/GenBank/DDBJ databases">
        <title>Large-scale analysis of RIKEN Arabidopsis full-length (RAFL) cDNAs.</title>
        <authorList>
            <person name="Totoki Y."/>
            <person name="Seki M."/>
            <person name="Ishida J."/>
            <person name="Nakajima M."/>
            <person name="Enju A."/>
            <person name="Kamiya A."/>
            <person name="Narusaka M."/>
            <person name="Shin-i T."/>
            <person name="Nakagawa M."/>
            <person name="Sakamoto N."/>
            <person name="Oishi K."/>
            <person name="Kohara Y."/>
            <person name="Kobayashi M."/>
            <person name="Toyoda A."/>
            <person name="Sakaki Y."/>
            <person name="Sakurai T."/>
            <person name="Iida K."/>
            <person name="Akiyama K."/>
            <person name="Satou M."/>
            <person name="Toyoda T."/>
            <person name="Konagaya A."/>
            <person name="Carninci P."/>
            <person name="Kawai J."/>
            <person name="Hayashizaki Y."/>
            <person name="Shinozaki K."/>
        </authorList>
    </citation>
    <scope>NUCLEOTIDE SEQUENCE [LARGE SCALE MRNA]</scope>
    <source>
        <strain>cv. Columbia</strain>
    </source>
</reference>
<reference key="5">
    <citation type="journal article" date="2012" name="Curr. Biol.">
        <title>The Arabidopsis nucleotidyl transferase HESO1 uridylates unmethylated small RNAs to trigger their degradation.</title>
        <authorList>
            <person name="Zhao Y."/>
            <person name="Yu Y."/>
            <person name="Zhai J."/>
            <person name="Ramachandran V."/>
            <person name="Dinh T.T."/>
            <person name="Meyers B.C."/>
            <person name="Mo B."/>
            <person name="Chen X."/>
        </authorList>
    </citation>
    <scope>FUNCTION</scope>
    <scope>CATALYTIC ACTIVITY</scope>
    <scope>ACTIVITY REGULATION</scope>
    <scope>DISRUPTION PHENOTYPE</scope>
</reference>
<reference key="6">
    <citation type="journal article" date="2012" name="Curr. Biol.">
        <title>Uridylation of miRNAs by hen1 suppressor1 in Arabidopsis.</title>
        <authorList>
            <person name="Ren G."/>
            <person name="Chen X."/>
            <person name="Yu B."/>
        </authorList>
    </citation>
    <scope>FUNCTION</scope>
    <scope>SUBCELLULAR LOCATION</scope>
</reference>
<reference key="7">
    <citation type="journal article" date="2014" name="Proc. Natl. Acad. Sci. U.S.A.">
        <title>Methylation protects microRNAs from an AGO1-associated activity that uridylates 5' RNA fragments generated by AGO1 cleavage.</title>
        <authorList>
            <person name="Ren G."/>
            <person name="Xie M."/>
            <person name="Zhang S."/>
            <person name="Vinovskis C."/>
            <person name="Chen X."/>
            <person name="Yu B."/>
        </authorList>
    </citation>
    <scope>FUNCTION</scope>
    <scope>INTERACTION WITH AGO1</scope>
</reference>
<reference key="8">
    <citation type="journal article" date="2015" name="PLoS Genet.">
        <title>Synergistic and independent actions of multiple terminal nucleotidyl transferases in the 3' tailing of small RNAs in Arabidopsis.</title>
        <authorList>
            <person name="Wang X."/>
            <person name="Zhang S."/>
            <person name="Dou Y."/>
            <person name="Zhang C."/>
            <person name="Chen X."/>
            <person name="Yu B."/>
            <person name="Ren G."/>
        </authorList>
    </citation>
    <scope>FUNCTION</scope>
    <scope>SUBCELLULAR LOCATION</scope>
</reference>
<reference key="9">
    <citation type="journal article" date="2015" name="PLoS Genet.">
        <title>Distinct and cooperative activities of HESO1 and URT1 nucleotidyl transferases in microRNA turnover in Arabidopsis.</title>
        <authorList>
            <person name="Tu B."/>
            <person name="Liu L."/>
            <person name="Xu C."/>
            <person name="Zhai J."/>
            <person name="Li S."/>
            <person name="Lopez M.A."/>
            <person name="Zhao Y."/>
            <person name="Yu Y."/>
            <person name="Ramachandran V."/>
            <person name="Ren G."/>
            <person name="Yu B."/>
            <person name="Li S."/>
            <person name="Meyers B.C."/>
            <person name="Mo B."/>
            <person name="Chen X."/>
        </authorList>
    </citation>
    <scope>FUNCTION</scope>
</reference>
<reference key="10">
    <citation type="journal article" date="2018" name="Front. Plant Sci.">
        <title>Respective contributions of URT1 and HESO1 to the uridylation of 5' fragments produced from RISC-cleaved mRNAs.</title>
        <authorList>
            <person name="Zuber H."/>
            <person name="Scheer H."/>
            <person name="Joly A.C."/>
            <person name="Gagliardi D."/>
        </authorList>
    </citation>
    <scope>FUNCTION</scope>
</reference>
<name>HESO1_ARATH</name>
<protein>
    <recommendedName>
        <fullName evidence="8">Protein HESO1</fullName>
        <ecNumber evidence="3">2.7.7.52</ecNumber>
    </recommendedName>
    <alternativeName>
        <fullName evidence="8">HEN1 suppressor 1</fullName>
    </alternativeName>
    <alternativeName>
        <fullName evidence="9">RNA uridylyltransferase</fullName>
    </alternativeName>
</protein>
<dbReference type="EC" id="2.7.7.52" evidence="3"/>
<dbReference type="EMBL" id="AC003000">
    <property type="protein sequence ID" value="AAB87123.1"/>
    <property type="status" value="ALT_SEQ"/>
    <property type="molecule type" value="Genomic_DNA"/>
</dbReference>
<dbReference type="EMBL" id="CP002685">
    <property type="protein sequence ID" value="AEC09717.1"/>
    <property type="molecule type" value="Genomic_DNA"/>
</dbReference>
<dbReference type="EMBL" id="CP002685">
    <property type="protein sequence ID" value="ANM62240.1"/>
    <property type="molecule type" value="Genomic_DNA"/>
</dbReference>
<dbReference type="EMBL" id="CP002685">
    <property type="protein sequence ID" value="ANM62241.1"/>
    <property type="molecule type" value="Genomic_DNA"/>
</dbReference>
<dbReference type="EMBL" id="BT015881">
    <property type="protein sequence ID" value="AAU95417.1"/>
    <property type="molecule type" value="mRNA"/>
</dbReference>
<dbReference type="EMBL" id="BT020198">
    <property type="protein sequence ID" value="AAV59264.1"/>
    <property type="molecule type" value="mRNA"/>
</dbReference>
<dbReference type="EMBL" id="AK227869">
    <property type="protein sequence ID" value="BAE99845.1"/>
    <property type="molecule type" value="mRNA"/>
</dbReference>
<dbReference type="PIR" id="T01004">
    <property type="entry name" value="T01004"/>
</dbReference>
<dbReference type="RefSeq" id="NP_001318386.1">
    <property type="nucleotide sequence ID" value="NM_001336793.1"/>
</dbReference>
<dbReference type="RefSeq" id="NP_001324414.1">
    <property type="nucleotide sequence ID" value="NM_001336794.1"/>
</dbReference>
<dbReference type="RefSeq" id="NP_181504.2">
    <property type="nucleotide sequence ID" value="NM_129532.4"/>
</dbReference>
<dbReference type="SMR" id="Q5XET5"/>
<dbReference type="FunCoup" id="Q5XET5">
    <property type="interactions" value="3765"/>
</dbReference>
<dbReference type="IntAct" id="Q5XET5">
    <property type="interactions" value="6"/>
</dbReference>
<dbReference type="STRING" id="3702.Q5XET5"/>
<dbReference type="iPTMnet" id="Q5XET5"/>
<dbReference type="PaxDb" id="3702-AT2G39740.1"/>
<dbReference type="ProteomicsDB" id="230837"/>
<dbReference type="EnsemblPlants" id="AT2G39740.1">
    <property type="protein sequence ID" value="AT2G39740.1"/>
    <property type="gene ID" value="AT2G39740"/>
</dbReference>
<dbReference type="EnsemblPlants" id="AT2G39740.2">
    <property type="protein sequence ID" value="AT2G39740.2"/>
    <property type="gene ID" value="AT2G39740"/>
</dbReference>
<dbReference type="EnsemblPlants" id="AT2G39740.3">
    <property type="protein sequence ID" value="AT2G39740.3"/>
    <property type="gene ID" value="AT2G39740"/>
</dbReference>
<dbReference type="GeneID" id="818559"/>
<dbReference type="Gramene" id="AT2G39740.1">
    <property type="protein sequence ID" value="AT2G39740.1"/>
    <property type="gene ID" value="AT2G39740"/>
</dbReference>
<dbReference type="Gramene" id="AT2G39740.2">
    <property type="protein sequence ID" value="AT2G39740.2"/>
    <property type="gene ID" value="AT2G39740"/>
</dbReference>
<dbReference type="Gramene" id="AT2G39740.3">
    <property type="protein sequence ID" value="AT2G39740.3"/>
    <property type="gene ID" value="AT2G39740"/>
</dbReference>
<dbReference type="KEGG" id="ath:AT2G39740"/>
<dbReference type="Araport" id="AT2G39740"/>
<dbReference type="TAIR" id="AT2G39740">
    <property type="gene designation" value="HESO1"/>
</dbReference>
<dbReference type="eggNOG" id="KOG2277">
    <property type="taxonomic scope" value="Eukaryota"/>
</dbReference>
<dbReference type="HOGENOM" id="CLU_032695_1_0_1"/>
<dbReference type="InParanoid" id="Q5XET5"/>
<dbReference type="OMA" id="SNMRWLP"/>
<dbReference type="PhylomeDB" id="Q5XET5"/>
<dbReference type="BRENDA" id="2.7.7.52">
    <property type="organism ID" value="399"/>
</dbReference>
<dbReference type="PRO" id="PR:Q5XET5"/>
<dbReference type="Proteomes" id="UP000006548">
    <property type="component" value="Chromosome 2"/>
</dbReference>
<dbReference type="ExpressionAtlas" id="Q5XET5">
    <property type="expression patterns" value="baseline and differential"/>
</dbReference>
<dbReference type="GO" id="GO:0005737">
    <property type="term" value="C:cytoplasm"/>
    <property type="evidence" value="ECO:0000314"/>
    <property type="project" value="TAIR"/>
</dbReference>
<dbReference type="GO" id="GO:0005634">
    <property type="term" value="C:nucleus"/>
    <property type="evidence" value="ECO:0000314"/>
    <property type="project" value="TAIR"/>
</dbReference>
<dbReference type="GO" id="GO:0000932">
    <property type="term" value="C:P-body"/>
    <property type="evidence" value="ECO:0007669"/>
    <property type="project" value="UniProtKB-SubCell"/>
</dbReference>
<dbReference type="GO" id="GO:0016779">
    <property type="term" value="F:nucleotidyltransferase activity"/>
    <property type="evidence" value="ECO:0000314"/>
    <property type="project" value="TAIR"/>
</dbReference>
<dbReference type="GO" id="GO:0050265">
    <property type="term" value="F:RNA uridylyltransferase activity"/>
    <property type="evidence" value="ECO:0000314"/>
    <property type="project" value="UniProtKB"/>
</dbReference>
<dbReference type="GO" id="GO:0010587">
    <property type="term" value="P:miRNA catabolic process"/>
    <property type="evidence" value="ECO:0000314"/>
    <property type="project" value="UniProtKB"/>
</dbReference>
<dbReference type="CDD" id="cd05402">
    <property type="entry name" value="NT_PAP_TUTase"/>
    <property type="match status" value="1"/>
</dbReference>
<dbReference type="FunFam" id="1.10.1410.10:FF:000048">
    <property type="entry name" value="HESO1"/>
    <property type="match status" value="1"/>
</dbReference>
<dbReference type="FunFam" id="3.30.460.10:FF:000088">
    <property type="entry name" value="Protein HESO1"/>
    <property type="match status" value="1"/>
</dbReference>
<dbReference type="Gene3D" id="1.10.1410.10">
    <property type="match status" value="1"/>
</dbReference>
<dbReference type="Gene3D" id="3.30.460.10">
    <property type="entry name" value="Beta Polymerase, domain 2"/>
    <property type="match status" value="1"/>
</dbReference>
<dbReference type="InterPro" id="IPR054708">
    <property type="entry name" value="MTPAP-like_central"/>
</dbReference>
<dbReference type="InterPro" id="IPR043519">
    <property type="entry name" value="NT_sf"/>
</dbReference>
<dbReference type="PANTHER" id="PTHR12271">
    <property type="entry name" value="POLY A POLYMERASE CID PAP -RELATED"/>
    <property type="match status" value="1"/>
</dbReference>
<dbReference type="PANTHER" id="PTHR12271:SF123">
    <property type="entry name" value="PROTEIN HESO1"/>
    <property type="match status" value="1"/>
</dbReference>
<dbReference type="Pfam" id="PF22600">
    <property type="entry name" value="MTPAP-like_central"/>
    <property type="match status" value="1"/>
</dbReference>
<dbReference type="SUPFAM" id="SSF81301">
    <property type="entry name" value="Nucleotidyltransferase"/>
    <property type="match status" value="1"/>
</dbReference>
<dbReference type="SUPFAM" id="SSF81631">
    <property type="entry name" value="PAP/OAS1 substrate-binding domain"/>
    <property type="match status" value="1"/>
</dbReference>
<comment type="function">
    <text evidence="2 3 4 5 6 7">Uridylates small RNAs to trigger their degradation (PubMed:22464191, PubMed:22464194, PubMed:25928341). Catalyzes the uridylation of 5' fragments produced by AGO1-mediated cleavage of miRNA target RNAs (PubMed:24733911). Acts synergistically with URT1 in unmethylated miRNA uridylation, leading to their degradation (PubMed:25928341). URT1 and HESO1 prefer substrates with different 3' end nucleotides and act cooperatively to tail different forms of the same miRNAs (PubMed:25928405). URT1 and HESO1 act sequentially, with URT1 mono-uridylating the miRNAs followed by their further uridylation by HESO1 (PubMed:25928405). URT1 and HESO1 are involved in the uridylation and clearance of RISC-generated 5' mRNA fragments (PubMed:30364210). Able to act on AGO1-bound miRNAs and the uridylated species stay associated with AGO1 (PubMed:24733911, PubMed:25928405).</text>
</comment>
<comment type="catalytic activity">
    <reaction evidence="3">
        <text>RNA(n) + UTP = RNA(n)-3'-uridine ribonucleotide + diphosphate</text>
        <dbReference type="Rhea" id="RHEA:14785"/>
        <dbReference type="Rhea" id="RHEA-COMP:14527"/>
        <dbReference type="Rhea" id="RHEA-COMP:17348"/>
        <dbReference type="ChEBI" id="CHEBI:33019"/>
        <dbReference type="ChEBI" id="CHEBI:46398"/>
        <dbReference type="ChEBI" id="CHEBI:140395"/>
        <dbReference type="ChEBI" id="CHEBI:173116"/>
        <dbReference type="EC" id="2.7.7.52"/>
    </reaction>
</comment>
<comment type="activity regulation">
    <text evidence="3">Completely inhibited by 2'-O-methylation on the substrate RNA.</text>
</comment>
<comment type="subcellular location">
    <subcellularLocation>
        <location evidence="2">Cytoplasm</location>
    </subcellularLocation>
    <subcellularLocation>
        <location evidence="5">Cytoplasm</location>
        <location evidence="5">P-body</location>
    </subcellularLocation>
    <subcellularLocation>
        <location evidence="2 5">Nucleus</location>
    </subcellularLocation>
</comment>
<comment type="disruption phenotype">
    <text evidence="3">No effect on miRNA accumulation in the wild-type background, but increased abundance of the heterogeneous miRNA species in a hen1 background. Reduced 3' uridylation of miRNAs without affecting the 3' truncation.</text>
</comment>
<comment type="similarity">
    <text evidence="9">Belongs to the DNA polymerase type-B-like family.</text>
</comment>
<comment type="sequence caution" evidence="9">
    <conflict type="erroneous gene model prediction">
        <sequence resource="EMBL-CDS" id="AAB87123"/>
    </conflict>
</comment>
<sequence length="511" mass="57592">MSRNPFLDPTLQEILQVIKPTRADRDTRITVIDQLRDVLQSVECLRGATVQPFGSFVSNLFTRWGDLDISVDLFSGSSILFTGKKQKQTLLGHLLRALRASGLWYKLQFVIHARVPILKVVSGHQRISCDISIDNLDGLLKSRFLFWISEIDGRFRDLVLLVKEWAKAHNINDSKTGTFNSYSLSLLVIFHFQTCVPAILPPLRVIYPKSAVDDLTGVRKTAEESIAQVTAANIARFKSERAKSVNRSSLSELLVSFFAKFSDINVKAQEFGVCPFTGRWETISSNTTWLPKTYSLFVEDPFEQPVNAARSVSRRNLDRIAQVFQITSRRLVSECNRNSIIGILTGQHIQESLYRTISLPSQHHANGMHNVRNLHGQARPQNQQMQQNWSQSYNTPNPPHWPPLTQSRPQQNWTQNNPRNLQGQPPVQGQTWPVITQTQTQQKSPYKSGNRPLKNTSAGSSQNQGHIGKPSGHMNGVNSARPAYTNGVNSARPPSKIPSQGGQIWRPRHEQ</sequence>
<feature type="chain" id="PRO_0000434143" description="Protein HESO1">
    <location>
        <begin position="1"/>
        <end position="511"/>
    </location>
</feature>
<feature type="region of interest" description="Disordered" evidence="1">
    <location>
        <begin position="378"/>
        <end position="511"/>
    </location>
</feature>
<feature type="compositionally biased region" description="Low complexity" evidence="1">
    <location>
        <begin position="381"/>
        <end position="392"/>
    </location>
</feature>
<feature type="compositionally biased region" description="Polar residues" evidence="1">
    <location>
        <begin position="404"/>
        <end position="465"/>
    </location>
</feature>
<feature type="sequence conflict" description="In Ref. 4; BAE99845." evidence="9" ref="4">
    <original>T</original>
    <variation>I</variation>
    <location>
        <position position="89"/>
    </location>
</feature>
<proteinExistence type="evidence at protein level"/>
<organism evidence="12">
    <name type="scientific">Arabidopsis thaliana</name>
    <name type="common">Mouse-ear cress</name>
    <dbReference type="NCBI Taxonomy" id="3702"/>
    <lineage>
        <taxon>Eukaryota</taxon>
        <taxon>Viridiplantae</taxon>
        <taxon>Streptophyta</taxon>
        <taxon>Embryophyta</taxon>
        <taxon>Tracheophyta</taxon>
        <taxon>Spermatophyta</taxon>
        <taxon>Magnoliopsida</taxon>
        <taxon>eudicotyledons</taxon>
        <taxon>Gunneridae</taxon>
        <taxon>Pentapetalae</taxon>
        <taxon>rosids</taxon>
        <taxon>malvids</taxon>
        <taxon>Brassicales</taxon>
        <taxon>Brassicaceae</taxon>
        <taxon>Camelineae</taxon>
        <taxon>Arabidopsis</taxon>
    </lineage>
</organism>
<gene>
    <name evidence="8" type="primary">HESO1</name>
    <name evidence="10" type="ordered locus">At2g39740</name>
    <name evidence="11" type="ORF">T5I7.4</name>
</gene>
<keyword id="KW-0963">Cytoplasm</keyword>
<keyword id="KW-0539">Nucleus</keyword>
<keyword id="KW-1185">Reference proteome</keyword>
<keyword id="KW-0808">Transferase</keyword>
<evidence type="ECO:0000256" key="1">
    <source>
        <dbReference type="SAM" id="MobiDB-lite"/>
    </source>
</evidence>
<evidence type="ECO:0000269" key="2">
    <source>
    </source>
</evidence>
<evidence type="ECO:0000269" key="3">
    <source>
    </source>
</evidence>
<evidence type="ECO:0000269" key="4">
    <source>
    </source>
</evidence>
<evidence type="ECO:0000269" key="5">
    <source>
    </source>
</evidence>
<evidence type="ECO:0000269" key="6">
    <source>
    </source>
</evidence>
<evidence type="ECO:0000269" key="7">
    <source>
    </source>
</evidence>
<evidence type="ECO:0000303" key="8">
    <source>
    </source>
</evidence>
<evidence type="ECO:0000305" key="9"/>
<evidence type="ECO:0000312" key="10">
    <source>
        <dbReference type="Araport" id="AT2G39740"/>
    </source>
</evidence>
<evidence type="ECO:0000312" key="11">
    <source>
        <dbReference type="EMBL" id="AAB87123.1"/>
    </source>
</evidence>
<evidence type="ECO:0000312" key="12">
    <source>
        <dbReference type="EMBL" id="AAU95417.1"/>
    </source>
</evidence>
<accession>Q5XET5</accession>
<accession>O22284</accession>
<accession>Q0WSQ3</accession>